<gene>
    <name evidence="1" type="primary">rplV</name>
    <name type="ordered locus">spyM18_0056</name>
</gene>
<protein>
    <recommendedName>
        <fullName evidence="1">Large ribosomal subunit protein uL22</fullName>
    </recommendedName>
    <alternativeName>
        <fullName evidence="2">50S ribosomal protein L22</fullName>
    </alternativeName>
</protein>
<keyword id="KW-0687">Ribonucleoprotein</keyword>
<keyword id="KW-0689">Ribosomal protein</keyword>
<keyword id="KW-0694">RNA-binding</keyword>
<keyword id="KW-0699">rRNA-binding</keyword>
<dbReference type="EMBL" id="AE009949">
    <property type="protein sequence ID" value="AAL96881.1"/>
    <property type="molecule type" value="Genomic_DNA"/>
</dbReference>
<dbReference type="RefSeq" id="WP_002986651.1">
    <property type="nucleotide sequence ID" value="NC_003485.1"/>
</dbReference>
<dbReference type="SMR" id="Q7CNQ0"/>
<dbReference type="GeneID" id="83703909"/>
<dbReference type="KEGG" id="spm:spyM18_0056"/>
<dbReference type="HOGENOM" id="CLU_083987_3_3_9"/>
<dbReference type="GO" id="GO:0022625">
    <property type="term" value="C:cytosolic large ribosomal subunit"/>
    <property type="evidence" value="ECO:0007669"/>
    <property type="project" value="TreeGrafter"/>
</dbReference>
<dbReference type="GO" id="GO:0019843">
    <property type="term" value="F:rRNA binding"/>
    <property type="evidence" value="ECO:0007669"/>
    <property type="project" value="UniProtKB-UniRule"/>
</dbReference>
<dbReference type="GO" id="GO:0003735">
    <property type="term" value="F:structural constituent of ribosome"/>
    <property type="evidence" value="ECO:0007669"/>
    <property type="project" value="InterPro"/>
</dbReference>
<dbReference type="GO" id="GO:0006412">
    <property type="term" value="P:translation"/>
    <property type="evidence" value="ECO:0007669"/>
    <property type="project" value="UniProtKB-UniRule"/>
</dbReference>
<dbReference type="CDD" id="cd00336">
    <property type="entry name" value="Ribosomal_L22"/>
    <property type="match status" value="1"/>
</dbReference>
<dbReference type="FunFam" id="3.90.470.10:FF:000001">
    <property type="entry name" value="50S ribosomal protein L22"/>
    <property type="match status" value="1"/>
</dbReference>
<dbReference type="Gene3D" id="3.90.470.10">
    <property type="entry name" value="Ribosomal protein L22/L17"/>
    <property type="match status" value="1"/>
</dbReference>
<dbReference type="HAMAP" id="MF_01331_B">
    <property type="entry name" value="Ribosomal_uL22_B"/>
    <property type="match status" value="1"/>
</dbReference>
<dbReference type="InterPro" id="IPR001063">
    <property type="entry name" value="Ribosomal_uL22"/>
</dbReference>
<dbReference type="InterPro" id="IPR005727">
    <property type="entry name" value="Ribosomal_uL22_bac/chlpt-type"/>
</dbReference>
<dbReference type="InterPro" id="IPR047867">
    <property type="entry name" value="Ribosomal_uL22_bac/org-type"/>
</dbReference>
<dbReference type="InterPro" id="IPR018260">
    <property type="entry name" value="Ribosomal_uL22_CS"/>
</dbReference>
<dbReference type="InterPro" id="IPR036394">
    <property type="entry name" value="Ribosomal_uL22_sf"/>
</dbReference>
<dbReference type="NCBIfam" id="TIGR01044">
    <property type="entry name" value="rplV_bact"/>
    <property type="match status" value="1"/>
</dbReference>
<dbReference type="PANTHER" id="PTHR13501">
    <property type="entry name" value="CHLOROPLAST 50S RIBOSOMAL PROTEIN L22-RELATED"/>
    <property type="match status" value="1"/>
</dbReference>
<dbReference type="PANTHER" id="PTHR13501:SF8">
    <property type="entry name" value="LARGE RIBOSOMAL SUBUNIT PROTEIN UL22M"/>
    <property type="match status" value="1"/>
</dbReference>
<dbReference type="Pfam" id="PF00237">
    <property type="entry name" value="Ribosomal_L22"/>
    <property type="match status" value="1"/>
</dbReference>
<dbReference type="SUPFAM" id="SSF54843">
    <property type="entry name" value="Ribosomal protein L22"/>
    <property type="match status" value="1"/>
</dbReference>
<dbReference type="PROSITE" id="PS00464">
    <property type="entry name" value="RIBOSOMAL_L22"/>
    <property type="match status" value="1"/>
</dbReference>
<name>RL22_STRP8</name>
<accession>Q7CNQ0</accession>
<sequence>MAEITSAKAMARTVRVSPRKTRLVLDLIRGKKVADAIAILKFTPNKAARVIEKTLNSAIANAENNFGLEKANLVVSETFANEGPTMKRFRPRAKGSASPINKRTTHVTVVVSEK</sequence>
<evidence type="ECO:0000255" key="1">
    <source>
        <dbReference type="HAMAP-Rule" id="MF_01331"/>
    </source>
</evidence>
<evidence type="ECO:0000305" key="2"/>
<reference key="1">
    <citation type="journal article" date="2002" name="Proc. Natl. Acad. Sci. U.S.A.">
        <title>Genome sequence and comparative microarray analysis of serotype M18 group A Streptococcus strains associated with acute rheumatic fever outbreaks.</title>
        <authorList>
            <person name="Smoot J.C."/>
            <person name="Barbian K.D."/>
            <person name="Van Gompel J.J."/>
            <person name="Smoot L.M."/>
            <person name="Chaussee M.S."/>
            <person name="Sylva G.L."/>
            <person name="Sturdevant D.E."/>
            <person name="Ricklefs S.M."/>
            <person name="Porcella S.F."/>
            <person name="Parkins L.D."/>
            <person name="Beres S.B."/>
            <person name="Campbell D.S."/>
            <person name="Smith T.M."/>
            <person name="Zhang Q."/>
            <person name="Kapur V."/>
            <person name="Daly J.A."/>
            <person name="Veasy L.G."/>
            <person name="Musser J.M."/>
        </authorList>
    </citation>
    <scope>NUCLEOTIDE SEQUENCE [LARGE SCALE GENOMIC DNA]</scope>
    <source>
        <strain>MGAS8232</strain>
    </source>
</reference>
<organism>
    <name type="scientific">Streptococcus pyogenes serotype M18 (strain MGAS8232)</name>
    <dbReference type="NCBI Taxonomy" id="186103"/>
    <lineage>
        <taxon>Bacteria</taxon>
        <taxon>Bacillati</taxon>
        <taxon>Bacillota</taxon>
        <taxon>Bacilli</taxon>
        <taxon>Lactobacillales</taxon>
        <taxon>Streptococcaceae</taxon>
        <taxon>Streptococcus</taxon>
    </lineage>
</organism>
<comment type="function">
    <text evidence="1">This protein binds specifically to 23S rRNA; its binding is stimulated by other ribosomal proteins, e.g. L4, L17, and L20. It is important during the early stages of 50S assembly. It makes multiple contacts with different domains of the 23S rRNA in the assembled 50S subunit and ribosome (By similarity).</text>
</comment>
<comment type="function">
    <text evidence="1">The globular domain of the protein is located near the polypeptide exit tunnel on the outside of the subunit, while an extended beta-hairpin is found that lines the wall of the exit tunnel in the center of the 70S ribosome.</text>
</comment>
<comment type="subunit">
    <text evidence="1">Part of the 50S ribosomal subunit.</text>
</comment>
<comment type="similarity">
    <text evidence="1">Belongs to the universal ribosomal protein uL22 family.</text>
</comment>
<proteinExistence type="inferred from homology"/>
<feature type="chain" id="PRO_0000125242" description="Large ribosomal subunit protein uL22">
    <location>
        <begin position="1"/>
        <end position="114"/>
    </location>
</feature>